<reference key="1">
    <citation type="journal article" date="2002" name="Nature">
        <title>Sequence and analysis of rice chromosome 4.</title>
        <authorList>
            <person name="Feng Q."/>
            <person name="Zhang Y."/>
            <person name="Hao P."/>
            <person name="Wang S."/>
            <person name="Fu G."/>
            <person name="Huang Y."/>
            <person name="Li Y."/>
            <person name="Zhu J."/>
            <person name="Liu Y."/>
            <person name="Hu X."/>
            <person name="Jia P."/>
            <person name="Zhang Y."/>
            <person name="Zhao Q."/>
            <person name="Ying K."/>
            <person name="Yu S."/>
            <person name="Tang Y."/>
            <person name="Weng Q."/>
            <person name="Zhang L."/>
            <person name="Lu Y."/>
            <person name="Mu J."/>
            <person name="Lu Y."/>
            <person name="Zhang L.S."/>
            <person name="Yu Z."/>
            <person name="Fan D."/>
            <person name="Liu X."/>
            <person name="Lu T."/>
            <person name="Li C."/>
            <person name="Wu Y."/>
            <person name="Sun T."/>
            <person name="Lei H."/>
            <person name="Li T."/>
            <person name="Hu H."/>
            <person name="Guan J."/>
            <person name="Wu M."/>
            <person name="Zhang R."/>
            <person name="Zhou B."/>
            <person name="Chen Z."/>
            <person name="Chen L."/>
            <person name="Jin Z."/>
            <person name="Wang R."/>
            <person name="Yin H."/>
            <person name="Cai Z."/>
            <person name="Ren S."/>
            <person name="Lv G."/>
            <person name="Gu W."/>
            <person name="Zhu G."/>
            <person name="Tu Y."/>
            <person name="Jia J."/>
            <person name="Zhang Y."/>
            <person name="Chen J."/>
            <person name="Kang H."/>
            <person name="Chen X."/>
            <person name="Shao C."/>
            <person name="Sun Y."/>
            <person name="Hu Q."/>
            <person name="Zhang X."/>
            <person name="Zhang W."/>
            <person name="Wang L."/>
            <person name="Ding C."/>
            <person name="Sheng H."/>
            <person name="Gu J."/>
            <person name="Chen S."/>
            <person name="Ni L."/>
            <person name="Zhu F."/>
            <person name="Chen W."/>
            <person name="Lan L."/>
            <person name="Lai Y."/>
            <person name="Cheng Z."/>
            <person name="Gu M."/>
            <person name="Jiang J."/>
            <person name="Li J."/>
            <person name="Hong G."/>
            <person name="Xue Y."/>
            <person name="Han B."/>
        </authorList>
    </citation>
    <scope>NUCLEOTIDE SEQUENCE [LARGE SCALE GENOMIC DNA]</scope>
    <source>
        <strain>cv. Nipponbare</strain>
    </source>
</reference>
<reference key="2">
    <citation type="journal article" date="2005" name="Nature">
        <title>The map-based sequence of the rice genome.</title>
        <authorList>
            <consortium name="International rice genome sequencing project (IRGSP)"/>
        </authorList>
    </citation>
    <scope>NUCLEOTIDE SEQUENCE [LARGE SCALE GENOMIC DNA]</scope>
    <source>
        <strain>cv. Nipponbare</strain>
    </source>
</reference>
<reference key="3">
    <citation type="journal article" date="2008" name="Nucleic Acids Res.">
        <title>The rice annotation project database (RAP-DB): 2008 update.</title>
        <authorList>
            <consortium name="The rice annotation project (RAP)"/>
        </authorList>
    </citation>
    <scope>GENOME REANNOTATION</scope>
    <source>
        <strain>cv. Nipponbare</strain>
    </source>
</reference>
<reference key="4">
    <citation type="journal article" date="2013" name="Rice">
        <title>Improvement of the Oryza sativa Nipponbare reference genome using next generation sequence and optical map data.</title>
        <authorList>
            <person name="Kawahara Y."/>
            <person name="de la Bastide M."/>
            <person name="Hamilton J.P."/>
            <person name="Kanamori H."/>
            <person name="McCombie W.R."/>
            <person name="Ouyang S."/>
            <person name="Schwartz D.C."/>
            <person name="Tanaka T."/>
            <person name="Wu J."/>
            <person name="Zhou S."/>
            <person name="Childs K.L."/>
            <person name="Davidson R.M."/>
            <person name="Lin H."/>
            <person name="Quesada-Ocampo L."/>
            <person name="Vaillancourt B."/>
            <person name="Sakai H."/>
            <person name="Lee S.S."/>
            <person name="Kim J."/>
            <person name="Numa H."/>
            <person name="Itoh T."/>
            <person name="Buell C.R."/>
            <person name="Matsumoto T."/>
        </authorList>
    </citation>
    <scope>GENOME REANNOTATION</scope>
    <source>
        <strain>cv. Nipponbare</strain>
    </source>
</reference>
<reference key="5">
    <citation type="journal article" date="2005" name="PLoS Biol.">
        <title>The genomes of Oryza sativa: a history of duplications.</title>
        <authorList>
            <person name="Yu J."/>
            <person name="Wang J."/>
            <person name="Lin W."/>
            <person name="Li S."/>
            <person name="Li H."/>
            <person name="Zhou J."/>
            <person name="Ni P."/>
            <person name="Dong W."/>
            <person name="Hu S."/>
            <person name="Zeng C."/>
            <person name="Zhang J."/>
            <person name="Zhang Y."/>
            <person name="Li R."/>
            <person name="Xu Z."/>
            <person name="Li S."/>
            <person name="Li X."/>
            <person name="Zheng H."/>
            <person name="Cong L."/>
            <person name="Lin L."/>
            <person name="Yin J."/>
            <person name="Geng J."/>
            <person name="Li G."/>
            <person name="Shi J."/>
            <person name="Liu J."/>
            <person name="Lv H."/>
            <person name="Li J."/>
            <person name="Wang J."/>
            <person name="Deng Y."/>
            <person name="Ran L."/>
            <person name="Shi X."/>
            <person name="Wang X."/>
            <person name="Wu Q."/>
            <person name="Li C."/>
            <person name="Ren X."/>
            <person name="Wang J."/>
            <person name="Wang X."/>
            <person name="Li D."/>
            <person name="Liu D."/>
            <person name="Zhang X."/>
            <person name="Ji Z."/>
            <person name="Zhao W."/>
            <person name="Sun Y."/>
            <person name="Zhang Z."/>
            <person name="Bao J."/>
            <person name="Han Y."/>
            <person name="Dong L."/>
            <person name="Ji J."/>
            <person name="Chen P."/>
            <person name="Wu S."/>
            <person name="Liu J."/>
            <person name="Xiao Y."/>
            <person name="Bu D."/>
            <person name="Tan J."/>
            <person name="Yang L."/>
            <person name="Ye C."/>
            <person name="Zhang J."/>
            <person name="Xu J."/>
            <person name="Zhou Y."/>
            <person name="Yu Y."/>
            <person name="Zhang B."/>
            <person name="Zhuang S."/>
            <person name="Wei H."/>
            <person name="Liu B."/>
            <person name="Lei M."/>
            <person name="Yu H."/>
            <person name="Li Y."/>
            <person name="Xu H."/>
            <person name="Wei S."/>
            <person name="He X."/>
            <person name="Fang L."/>
            <person name="Zhang Z."/>
            <person name="Zhang Y."/>
            <person name="Huang X."/>
            <person name="Su Z."/>
            <person name="Tong W."/>
            <person name="Li J."/>
            <person name="Tong Z."/>
            <person name="Li S."/>
            <person name="Ye J."/>
            <person name="Wang L."/>
            <person name="Fang L."/>
            <person name="Lei T."/>
            <person name="Chen C.-S."/>
            <person name="Chen H.-C."/>
            <person name="Xu Z."/>
            <person name="Li H."/>
            <person name="Huang H."/>
            <person name="Zhang F."/>
            <person name="Xu H."/>
            <person name="Li N."/>
            <person name="Zhao C."/>
            <person name="Li S."/>
            <person name="Dong L."/>
            <person name="Huang Y."/>
            <person name="Li L."/>
            <person name="Xi Y."/>
            <person name="Qi Q."/>
            <person name="Li W."/>
            <person name="Zhang B."/>
            <person name="Hu W."/>
            <person name="Zhang Y."/>
            <person name="Tian X."/>
            <person name="Jiao Y."/>
            <person name="Liang X."/>
            <person name="Jin J."/>
            <person name="Gao L."/>
            <person name="Zheng W."/>
            <person name="Hao B."/>
            <person name="Liu S.-M."/>
            <person name="Wang W."/>
            <person name="Yuan L."/>
            <person name="Cao M."/>
            <person name="McDermott J."/>
            <person name="Samudrala R."/>
            <person name="Wang J."/>
            <person name="Wong G.K.-S."/>
            <person name="Yang H."/>
        </authorList>
    </citation>
    <scope>NUCLEOTIDE SEQUENCE [LARGE SCALE GENOMIC DNA]</scope>
    <source>
        <strain>cv. Nipponbare</strain>
    </source>
</reference>
<reference key="6">
    <citation type="journal article" date="2003" name="Science">
        <title>Collection, mapping, and annotation of over 28,000 cDNA clones from japonica rice.</title>
        <authorList>
            <consortium name="The rice full-length cDNA consortium"/>
        </authorList>
    </citation>
    <scope>NUCLEOTIDE SEQUENCE [LARGE SCALE MRNA]</scope>
    <source>
        <strain>cv. Nipponbare</strain>
    </source>
</reference>
<reference key="7">
    <citation type="journal article" date="2010" name="J. Biol. Chem.">
        <title>Conserved and novel functions for Arabidopsis thaliana MIA40 in assembly of proteins in mitochondria and peroxisomes.</title>
        <authorList>
            <person name="Carrie C."/>
            <person name="Giraud E."/>
            <person name="Duncan O."/>
            <person name="Xu L."/>
            <person name="Wang Y."/>
            <person name="Huang S."/>
            <person name="Clifton R."/>
            <person name="Murcha M."/>
            <person name="Filipovska A."/>
            <person name="Rackham O."/>
            <person name="Vrielink A."/>
            <person name="Whelan J."/>
        </authorList>
    </citation>
    <scope>SUBCELLULAR LOCATION</scope>
</reference>
<keyword id="KW-1015">Disulfide bond</keyword>
<keyword id="KW-0496">Mitochondrion</keyword>
<keyword id="KW-0560">Oxidoreductase</keyword>
<keyword id="KW-0576">Peroxisome</keyword>
<keyword id="KW-0653">Protein transport</keyword>
<keyword id="KW-0676">Redox-active center</keyword>
<keyword id="KW-1185">Reference proteome</keyword>
<keyword id="KW-0811">Translocation</keyword>
<keyword id="KW-0813">Transport</keyword>
<feature type="chain" id="PRO_0000437985" description="Mitochondrial intermembrane space import and assembly protein 40 homolog">
    <location>
        <begin position="1"/>
        <end position="151"/>
    </location>
</feature>
<feature type="domain" description="CHCH" evidence="2">
    <location>
        <begin position="73"/>
        <end position="117"/>
    </location>
</feature>
<feature type="region of interest" description="Disordered" evidence="3">
    <location>
        <begin position="1"/>
        <end position="35"/>
    </location>
</feature>
<feature type="region of interest" description="Disordered" evidence="3">
    <location>
        <begin position="123"/>
        <end position="151"/>
    </location>
</feature>
<feature type="short sequence motif" description="Cx9C motif 1" evidence="2">
    <location>
        <begin position="76"/>
        <end position="86"/>
    </location>
</feature>
<feature type="short sequence motif" description="Cx9C motif 2" evidence="2">
    <location>
        <begin position="99"/>
        <end position="109"/>
    </location>
</feature>
<feature type="compositionally biased region" description="Low complexity" evidence="3">
    <location>
        <begin position="7"/>
        <end position="26"/>
    </location>
</feature>
<feature type="disulfide bond" description="Redox-active" evidence="1">
    <location>
        <begin position="65"/>
        <end position="67"/>
    </location>
</feature>
<feature type="disulfide bond" evidence="2">
    <location>
        <begin position="76"/>
        <end position="109"/>
    </location>
</feature>
<feature type="disulfide bond" evidence="2">
    <location>
        <begin position="86"/>
        <end position="99"/>
    </location>
</feature>
<accession>Q7XKI7</accession>
<sequence length="151" mass="16099">MGQGLSQPAQAVEEPSPPAVEAAPSSSPSPAPAPSSLEALAAEAMSFDEDGNESIDVKVQKALDCPCVAELKNGPCGSQFVDAFSCFLKSTEEEKGSDCVKPFIALQDCIKINPEAFSKEILEEEENDEEAEKSNLKVRAPAWSRESKPKL</sequence>
<comment type="function">
    <text evidence="5">Required for the import and folding of small cysteine-containing proteins in the mitochondrial intermembrane space.</text>
</comment>
<comment type="subcellular location">
    <subcellularLocation>
        <location evidence="6">Mitochondrion intermembrane space</location>
    </subcellularLocation>
    <subcellularLocation>
        <location evidence="6">Peroxisome matrix</location>
    </subcellularLocation>
</comment>
<organism>
    <name type="scientific">Oryza sativa subsp. japonica</name>
    <name type="common">Rice</name>
    <dbReference type="NCBI Taxonomy" id="39947"/>
    <lineage>
        <taxon>Eukaryota</taxon>
        <taxon>Viridiplantae</taxon>
        <taxon>Streptophyta</taxon>
        <taxon>Embryophyta</taxon>
        <taxon>Tracheophyta</taxon>
        <taxon>Spermatophyta</taxon>
        <taxon>Magnoliopsida</taxon>
        <taxon>Liliopsida</taxon>
        <taxon>Poales</taxon>
        <taxon>Poaceae</taxon>
        <taxon>BOP clade</taxon>
        <taxon>Oryzoideae</taxon>
        <taxon>Oryzeae</taxon>
        <taxon>Oryzinae</taxon>
        <taxon>Oryza</taxon>
        <taxon>Oryza sativa</taxon>
    </lineage>
</organism>
<proteinExistence type="evidence at transcript level"/>
<dbReference type="EMBL" id="AL663019">
    <property type="protein sequence ID" value="CAE05655.2"/>
    <property type="molecule type" value="Genomic_DNA"/>
</dbReference>
<dbReference type="EMBL" id="AP008210">
    <property type="protein sequence ID" value="BAF15283.1"/>
    <property type="molecule type" value="Genomic_DNA"/>
</dbReference>
<dbReference type="EMBL" id="AP014960">
    <property type="protein sequence ID" value="BAS90175.1"/>
    <property type="molecule type" value="Genomic_DNA"/>
</dbReference>
<dbReference type="EMBL" id="CM000141">
    <property type="protein sequence ID" value="EEE61375.1"/>
    <property type="molecule type" value="Genomic_DNA"/>
</dbReference>
<dbReference type="EMBL" id="AK072980">
    <property type="protein sequence ID" value="BAG93231.1"/>
    <property type="molecule type" value="mRNA"/>
</dbReference>
<dbReference type="RefSeq" id="XP_015636074.1">
    <property type="nucleotide sequence ID" value="XM_015780588.1"/>
</dbReference>
<dbReference type="SMR" id="Q7XKI7"/>
<dbReference type="FunCoup" id="Q7XKI7">
    <property type="interactions" value="50"/>
</dbReference>
<dbReference type="STRING" id="39947.Q7XKI7"/>
<dbReference type="PaxDb" id="39947-Q7XKI7"/>
<dbReference type="EnsemblPlants" id="Os04t0527700-01">
    <property type="protein sequence ID" value="Os04t0527700-01"/>
    <property type="gene ID" value="Os04g0527700"/>
</dbReference>
<dbReference type="Gramene" id="Os04t0527700-01">
    <property type="protein sequence ID" value="Os04t0527700-01"/>
    <property type="gene ID" value="Os04g0527700"/>
</dbReference>
<dbReference type="KEGG" id="dosa:Os04g0527700"/>
<dbReference type="eggNOG" id="KOG4149">
    <property type="taxonomic scope" value="Eukaryota"/>
</dbReference>
<dbReference type="HOGENOM" id="CLU_120204_0_0_1"/>
<dbReference type="InParanoid" id="Q7XKI7"/>
<dbReference type="OMA" id="IRERCGX"/>
<dbReference type="OrthoDB" id="7481291at2759"/>
<dbReference type="Proteomes" id="UP000000763">
    <property type="component" value="Chromosome 4"/>
</dbReference>
<dbReference type="Proteomes" id="UP000007752">
    <property type="component" value="Chromosome 4"/>
</dbReference>
<dbReference type="Proteomes" id="UP000059680">
    <property type="component" value="Chromosome 4"/>
</dbReference>
<dbReference type="GO" id="GO:0005758">
    <property type="term" value="C:mitochondrial intermembrane space"/>
    <property type="evidence" value="ECO:0000318"/>
    <property type="project" value="GO_Central"/>
</dbReference>
<dbReference type="GO" id="GO:0005782">
    <property type="term" value="C:peroxisomal matrix"/>
    <property type="evidence" value="ECO:0007669"/>
    <property type="project" value="UniProtKB-SubCell"/>
</dbReference>
<dbReference type="GO" id="GO:0015035">
    <property type="term" value="F:protein-disulfide reductase activity"/>
    <property type="evidence" value="ECO:0000318"/>
    <property type="project" value="GO_Central"/>
</dbReference>
<dbReference type="GO" id="GO:0045041">
    <property type="term" value="P:protein import into mitochondrial intermembrane space"/>
    <property type="evidence" value="ECO:0000318"/>
    <property type="project" value="GO_Central"/>
</dbReference>
<dbReference type="GO" id="GO:0006625">
    <property type="term" value="P:protein targeting to peroxisome"/>
    <property type="evidence" value="ECO:0007669"/>
    <property type="project" value="EnsemblPlants"/>
</dbReference>
<dbReference type="FunFam" id="1.10.287.2900:FF:000003">
    <property type="entry name" value="mitochondrial intermembrane space import and assembly protein 40"/>
    <property type="match status" value="1"/>
</dbReference>
<dbReference type="Gene3D" id="1.10.287.2900">
    <property type="match status" value="1"/>
</dbReference>
<dbReference type="InterPro" id="IPR039289">
    <property type="entry name" value="CHCHD4"/>
</dbReference>
<dbReference type="PANTHER" id="PTHR21622">
    <property type="entry name" value="COILED-COIL-HELIX-COILED-COIL-HELIX DOMAIN CONTAINING 4"/>
    <property type="match status" value="1"/>
</dbReference>
<dbReference type="PANTHER" id="PTHR21622:SF0">
    <property type="entry name" value="COILED-COIL-HELIX-COILED-COIL-HELIX DOMAIN CONTAINING 4"/>
    <property type="match status" value="1"/>
</dbReference>
<protein>
    <recommendedName>
        <fullName evidence="5">Mitochondrial intermembrane space import and assembly protein 40 homolog</fullName>
        <shortName evidence="4">OsMIA40</shortName>
    </recommendedName>
</protein>
<name>MIA40_ORYSJ</name>
<evidence type="ECO:0000250" key="1">
    <source>
        <dbReference type="UniProtKB" id="Q8N4Q1"/>
    </source>
</evidence>
<evidence type="ECO:0000255" key="2">
    <source>
        <dbReference type="PROSITE-ProRule" id="PRU01150"/>
    </source>
</evidence>
<evidence type="ECO:0000256" key="3">
    <source>
        <dbReference type="SAM" id="MobiDB-lite"/>
    </source>
</evidence>
<evidence type="ECO:0000303" key="4">
    <source>
    </source>
</evidence>
<evidence type="ECO:0000305" key="5"/>
<evidence type="ECO:0000305" key="6">
    <source>
    </source>
</evidence>
<evidence type="ECO:0000312" key="7">
    <source>
        <dbReference type="EMBL" id="BAS90175.1"/>
    </source>
</evidence>
<evidence type="ECO:0000312" key="8">
    <source>
        <dbReference type="EMBL" id="CAE05655.2"/>
    </source>
</evidence>
<evidence type="ECO:0000312" key="9">
    <source>
        <dbReference type="EMBL" id="EEE61375.1"/>
    </source>
</evidence>
<gene>
    <name evidence="4" type="primary">MIA40</name>
    <name evidence="7" type="ordered locus">Os04g0527700</name>
    <name evidence="5" type="ordered locus">LOC_Os04g44550</name>
    <name evidence="9" type="ORF">OsJ_15538</name>
    <name evidence="8" type="ORF">OSJNBa0038O10.21</name>
</gene>